<reference key="1">
    <citation type="journal article" date="2004" name="Proc. Natl. Acad. Sci. U.S.A.">
        <title>Genomic analysis of Bacteroides fragilis reveals extensive DNA inversions regulating cell surface adaptation.</title>
        <authorList>
            <person name="Kuwahara T."/>
            <person name="Yamashita A."/>
            <person name="Hirakawa H."/>
            <person name="Nakayama H."/>
            <person name="Toh H."/>
            <person name="Okada N."/>
            <person name="Kuhara S."/>
            <person name="Hattori M."/>
            <person name="Hayashi T."/>
            <person name="Ohnishi Y."/>
        </authorList>
    </citation>
    <scope>NUCLEOTIDE SEQUENCE [LARGE SCALE GENOMIC DNA]</scope>
    <source>
        <strain>YCH46</strain>
    </source>
</reference>
<organism>
    <name type="scientific">Bacteroides fragilis (strain YCH46)</name>
    <dbReference type="NCBI Taxonomy" id="295405"/>
    <lineage>
        <taxon>Bacteria</taxon>
        <taxon>Pseudomonadati</taxon>
        <taxon>Bacteroidota</taxon>
        <taxon>Bacteroidia</taxon>
        <taxon>Bacteroidales</taxon>
        <taxon>Bacteroidaceae</taxon>
        <taxon>Bacteroides</taxon>
    </lineage>
</organism>
<proteinExistence type="inferred from homology"/>
<protein>
    <recommendedName>
        <fullName evidence="1">Ribosomal RNA large subunit methyltransferase F</fullName>
        <ecNumber evidence="1">2.1.1.181</ecNumber>
    </recommendedName>
    <alternativeName>
        <fullName evidence="1">23S rRNA mA1618 methyltransferase</fullName>
    </alternativeName>
    <alternativeName>
        <fullName evidence="1">rRNA adenine N-6-methyltransferase</fullName>
    </alternativeName>
</protein>
<dbReference type="EC" id="2.1.1.181" evidence="1"/>
<dbReference type="EMBL" id="AP006841">
    <property type="protein sequence ID" value="BAD49826.1"/>
    <property type="molecule type" value="Genomic_DNA"/>
</dbReference>
<dbReference type="RefSeq" id="WP_011203138.1">
    <property type="nucleotide sequence ID" value="NC_006347.1"/>
</dbReference>
<dbReference type="RefSeq" id="YP_100360.1">
    <property type="nucleotide sequence ID" value="NC_006347.1"/>
</dbReference>
<dbReference type="SMR" id="Q64RQ5"/>
<dbReference type="STRING" id="295405.BF3081"/>
<dbReference type="KEGG" id="bfr:BF3081"/>
<dbReference type="PATRIC" id="fig|295405.11.peg.2947"/>
<dbReference type="HOGENOM" id="CLU_027534_3_0_10"/>
<dbReference type="OrthoDB" id="1115728at2"/>
<dbReference type="Proteomes" id="UP000002197">
    <property type="component" value="Chromosome"/>
</dbReference>
<dbReference type="GO" id="GO:0005737">
    <property type="term" value="C:cytoplasm"/>
    <property type="evidence" value="ECO:0007669"/>
    <property type="project" value="UniProtKB-SubCell"/>
</dbReference>
<dbReference type="GO" id="GO:0052907">
    <property type="term" value="F:23S rRNA (adenine(1618)-N(6))-methyltransferase activity"/>
    <property type="evidence" value="ECO:0007669"/>
    <property type="project" value="UniProtKB-EC"/>
</dbReference>
<dbReference type="GO" id="GO:0070475">
    <property type="term" value="P:rRNA base methylation"/>
    <property type="evidence" value="ECO:0007669"/>
    <property type="project" value="TreeGrafter"/>
</dbReference>
<dbReference type="CDD" id="cd02440">
    <property type="entry name" value="AdoMet_MTases"/>
    <property type="match status" value="1"/>
</dbReference>
<dbReference type="Gene3D" id="3.40.50.150">
    <property type="entry name" value="Vaccinia Virus protein VP39"/>
    <property type="match status" value="1"/>
</dbReference>
<dbReference type="HAMAP" id="MF_01848">
    <property type="entry name" value="23SrRNA_methyltr_F"/>
    <property type="match status" value="1"/>
</dbReference>
<dbReference type="InterPro" id="IPR010286">
    <property type="entry name" value="METTL16/RlmF"/>
</dbReference>
<dbReference type="InterPro" id="IPR016909">
    <property type="entry name" value="rRNA_lsu_MeTfrase_F"/>
</dbReference>
<dbReference type="InterPro" id="IPR029063">
    <property type="entry name" value="SAM-dependent_MTases_sf"/>
</dbReference>
<dbReference type="NCBIfam" id="NF008725">
    <property type="entry name" value="PRK11727.1"/>
    <property type="match status" value="1"/>
</dbReference>
<dbReference type="PANTHER" id="PTHR13393:SF0">
    <property type="entry name" value="RNA N6-ADENOSINE-METHYLTRANSFERASE METTL16"/>
    <property type="match status" value="1"/>
</dbReference>
<dbReference type="PANTHER" id="PTHR13393">
    <property type="entry name" value="SAM-DEPENDENT METHYLTRANSFERASE"/>
    <property type="match status" value="1"/>
</dbReference>
<dbReference type="Pfam" id="PF05971">
    <property type="entry name" value="Methyltransf_10"/>
    <property type="match status" value="1"/>
</dbReference>
<dbReference type="PIRSF" id="PIRSF029038">
    <property type="entry name" value="Mtase_YbiN_prd"/>
    <property type="match status" value="1"/>
</dbReference>
<dbReference type="SUPFAM" id="SSF53335">
    <property type="entry name" value="S-adenosyl-L-methionine-dependent methyltransferases"/>
    <property type="match status" value="1"/>
</dbReference>
<feature type="chain" id="PRO_0000349895" description="Ribosomal RNA large subunit methyltransferase F">
    <location>
        <begin position="1"/>
        <end position="305"/>
    </location>
</feature>
<sequence>MAERNELHKRNRHNGQYDFSRLTEEYPPLKKFIVLNAYGTTSIDFFNPRAVKALNKALLISCYGIRYWDIPKNYLCPPIPGRADYIHYIADLIQPDISDESTGLKTAIPNARQYRCLDIGVGANCIYPIIGQTEYGWTFVGSDIDPVSIDNARKIVTCNPALAHKIELRLQRDSRKIFEGIIAPNEYFDVTLCNPPFHSSKEEAEDGTLRKLSSLKGKKVTKARLNFGGNANELWCEGGELRFLLTMIEESRNYRKNCGWFTSLVSKEKNLGKLTAKLKSTDIAEHRIIEMHQGTKTSRILAWRF</sequence>
<comment type="function">
    <text evidence="1">Specifically methylates the adenine in position 1618 of 23S rRNA.</text>
</comment>
<comment type="catalytic activity">
    <reaction evidence="1">
        <text>adenosine(1618) in 23S rRNA + S-adenosyl-L-methionine = N(6)-methyladenosine(1618) in 23S rRNA + S-adenosyl-L-homocysteine + H(+)</text>
        <dbReference type="Rhea" id="RHEA:16497"/>
        <dbReference type="Rhea" id="RHEA-COMP:10229"/>
        <dbReference type="Rhea" id="RHEA-COMP:10231"/>
        <dbReference type="ChEBI" id="CHEBI:15378"/>
        <dbReference type="ChEBI" id="CHEBI:57856"/>
        <dbReference type="ChEBI" id="CHEBI:59789"/>
        <dbReference type="ChEBI" id="CHEBI:74411"/>
        <dbReference type="ChEBI" id="CHEBI:74449"/>
        <dbReference type="EC" id="2.1.1.181"/>
    </reaction>
</comment>
<comment type="subcellular location">
    <subcellularLocation>
        <location evidence="1">Cytoplasm</location>
    </subcellularLocation>
</comment>
<comment type="similarity">
    <text evidence="1">Belongs to the methyltransferase superfamily. METTL16/RlmF family.</text>
</comment>
<accession>Q64RQ5</accession>
<gene>
    <name evidence="1" type="primary">rlmF</name>
    <name type="ordered locus">BF3081</name>
</gene>
<evidence type="ECO:0000255" key="1">
    <source>
        <dbReference type="HAMAP-Rule" id="MF_01848"/>
    </source>
</evidence>
<name>RLMF_BACFR</name>
<keyword id="KW-0963">Cytoplasm</keyword>
<keyword id="KW-0489">Methyltransferase</keyword>
<keyword id="KW-0698">rRNA processing</keyword>
<keyword id="KW-0949">S-adenosyl-L-methionine</keyword>
<keyword id="KW-0808">Transferase</keyword>